<feature type="chain" id="PRO_1000085156" description="Chaperone protein DnaJ">
    <location>
        <begin position="1"/>
        <end position="378"/>
    </location>
</feature>
<feature type="domain" description="J" evidence="1">
    <location>
        <begin position="5"/>
        <end position="70"/>
    </location>
</feature>
<feature type="repeat" description="CXXCXGXG motif">
    <location>
        <begin position="151"/>
        <end position="158"/>
    </location>
</feature>
<feature type="repeat" description="CXXCXGXG motif">
    <location>
        <begin position="168"/>
        <end position="175"/>
    </location>
</feature>
<feature type="repeat" description="CXXCXGXG motif">
    <location>
        <begin position="190"/>
        <end position="197"/>
    </location>
</feature>
<feature type="repeat" description="CXXCXGXG motif">
    <location>
        <begin position="204"/>
        <end position="211"/>
    </location>
</feature>
<feature type="zinc finger region" description="CR-type" evidence="1">
    <location>
        <begin position="138"/>
        <end position="216"/>
    </location>
</feature>
<feature type="binding site" evidence="1">
    <location>
        <position position="151"/>
    </location>
    <ligand>
        <name>Zn(2+)</name>
        <dbReference type="ChEBI" id="CHEBI:29105"/>
        <label>1</label>
    </ligand>
</feature>
<feature type="binding site" evidence="1">
    <location>
        <position position="154"/>
    </location>
    <ligand>
        <name>Zn(2+)</name>
        <dbReference type="ChEBI" id="CHEBI:29105"/>
        <label>1</label>
    </ligand>
</feature>
<feature type="binding site" evidence="1">
    <location>
        <position position="168"/>
    </location>
    <ligand>
        <name>Zn(2+)</name>
        <dbReference type="ChEBI" id="CHEBI:29105"/>
        <label>2</label>
    </ligand>
</feature>
<feature type="binding site" evidence="1">
    <location>
        <position position="171"/>
    </location>
    <ligand>
        <name>Zn(2+)</name>
        <dbReference type="ChEBI" id="CHEBI:29105"/>
        <label>2</label>
    </ligand>
</feature>
<feature type="binding site" evidence="1">
    <location>
        <position position="190"/>
    </location>
    <ligand>
        <name>Zn(2+)</name>
        <dbReference type="ChEBI" id="CHEBI:29105"/>
        <label>2</label>
    </ligand>
</feature>
<feature type="binding site" evidence="1">
    <location>
        <position position="193"/>
    </location>
    <ligand>
        <name>Zn(2+)</name>
        <dbReference type="ChEBI" id="CHEBI:29105"/>
        <label>2</label>
    </ligand>
</feature>
<feature type="binding site" evidence="1">
    <location>
        <position position="204"/>
    </location>
    <ligand>
        <name>Zn(2+)</name>
        <dbReference type="ChEBI" id="CHEBI:29105"/>
        <label>1</label>
    </ligand>
</feature>
<feature type="binding site" evidence="1">
    <location>
        <position position="207"/>
    </location>
    <ligand>
        <name>Zn(2+)</name>
        <dbReference type="ChEBI" id="CHEBI:29105"/>
        <label>1</label>
    </ligand>
</feature>
<protein>
    <recommendedName>
        <fullName evidence="1">Chaperone protein DnaJ</fullName>
    </recommendedName>
</protein>
<reference key="1">
    <citation type="submission" date="2006-08" db="EMBL/GenBank/DDBJ databases">
        <title>Complete sequence of chromosome 1 of Burkholderia cepacia AMMD.</title>
        <authorList>
            <person name="Copeland A."/>
            <person name="Lucas S."/>
            <person name="Lapidus A."/>
            <person name="Barry K."/>
            <person name="Detter J.C."/>
            <person name="Glavina del Rio T."/>
            <person name="Hammon N."/>
            <person name="Israni S."/>
            <person name="Pitluck S."/>
            <person name="Bruce D."/>
            <person name="Chain P."/>
            <person name="Malfatti S."/>
            <person name="Shin M."/>
            <person name="Vergez L."/>
            <person name="Schmutz J."/>
            <person name="Larimer F."/>
            <person name="Land M."/>
            <person name="Hauser L."/>
            <person name="Kyrpides N."/>
            <person name="Kim E."/>
            <person name="Parke J."/>
            <person name="Coenye T."/>
            <person name="Konstantinidis K."/>
            <person name="Ramette A."/>
            <person name="Tiedje J."/>
            <person name="Richardson P."/>
        </authorList>
    </citation>
    <scope>NUCLEOTIDE SEQUENCE [LARGE SCALE GENOMIC DNA]</scope>
    <source>
        <strain>ATCC BAA-244 / DSM 16087 / CCUG 44356 / LMG 19182 / AMMD</strain>
    </source>
</reference>
<organism>
    <name type="scientific">Burkholderia ambifaria (strain ATCC BAA-244 / DSM 16087 / CCUG 44356 / LMG 19182 / AMMD)</name>
    <name type="common">Burkholderia cepacia (strain AMMD)</name>
    <dbReference type="NCBI Taxonomy" id="339670"/>
    <lineage>
        <taxon>Bacteria</taxon>
        <taxon>Pseudomonadati</taxon>
        <taxon>Pseudomonadota</taxon>
        <taxon>Betaproteobacteria</taxon>
        <taxon>Burkholderiales</taxon>
        <taxon>Burkholderiaceae</taxon>
        <taxon>Burkholderia</taxon>
        <taxon>Burkholderia cepacia complex</taxon>
    </lineage>
</organism>
<dbReference type="EMBL" id="CP000440">
    <property type="protein sequence ID" value="ABI86206.1"/>
    <property type="molecule type" value="Genomic_DNA"/>
</dbReference>
<dbReference type="RefSeq" id="WP_011656039.1">
    <property type="nucleotide sequence ID" value="NZ_CP009798.1"/>
</dbReference>
<dbReference type="SMR" id="Q0BI17"/>
<dbReference type="GeneID" id="93083943"/>
<dbReference type="KEGG" id="bam:Bamb_0647"/>
<dbReference type="PATRIC" id="fig|339670.21.peg.949"/>
<dbReference type="eggNOG" id="COG0484">
    <property type="taxonomic scope" value="Bacteria"/>
</dbReference>
<dbReference type="Proteomes" id="UP000000662">
    <property type="component" value="Chromosome 1"/>
</dbReference>
<dbReference type="GO" id="GO:0005737">
    <property type="term" value="C:cytoplasm"/>
    <property type="evidence" value="ECO:0007669"/>
    <property type="project" value="UniProtKB-SubCell"/>
</dbReference>
<dbReference type="GO" id="GO:0005524">
    <property type="term" value="F:ATP binding"/>
    <property type="evidence" value="ECO:0007669"/>
    <property type="project" value="InterPro"/>
</dbReference>
<dbReference type="GO" id="GO:0031072">
    <property type="term" value="F:heat shock protein binding"/>
    <property type="evidence" value="ECO:0007669"/>
    <property type="project" value="InterPro"/>
</dbReference>
<dbReference type="GO" id="GO:0051082">
    <property type="term" value="F:unfolded protein binding"/>
    <property type="evidence" value="ECO:0007669"/>
    <property type="project" value="UniProtKB-UniRule"/>
</dbReference>
<dbReference type="GO" id="GO:0008270">
    <property type="term" value="F:zinc ion binding"/>
    <property type="evidence" value="ECO:0007669"/>
    <property type="project" value="UniProtKB-UniRule"/>
</dbReference>
<dbReference type="GO" id="GO:0051085">
    <property type="term" value="P:chaperone cofactor-dependent protein refolding"/>
    <property type="evidence" value="ECO:0007669"/>
    <property type="project" value="TreeGrafter"/>
</dbReference>
<dbReference type="GO" id="GO:0006260">
    <property type="term" value="P:DNA replication"/>
    <property type="evidence" value="ECO:0007669"/>
    <property type="project" value="UniProtKB-KW"/>
</dbReference>
<dbReference type="GO" id="GO:0042026">
    <property type="term" value="P:protein refolding"/>
    <property type="evidence" value="ECO:0007669"/>
    <property type="project" value="TreeGrafter"/>
</dbReference>
<dbReference type="GO" id="GO:0009408">
    <property type="term" value="P:response to heat"/>
    <property type="evidence" value="ECO:0007669"/>
    <property type="project" value="InterPro"/>
</dbReference>
<dbReference type="CDD" id="cd06257">
    <property type="entry name" value="DnaJ"/>
    <property type="match status" value="1"/>
</dbReference>
<dbReference type="CDD" id="cd10747">
    <property type="entry name" value="DnaJ_C"/>
    <property type="match status" value="1"/>
</dbReference>
<dbReference type="CDD" id="cd10719">
    <property type="entry name" value="DnaJ_zf"/>
    <property type="match status" value="1"/>
</dbReference>
<dbReference type="FunFam" id="1.10.287.110:FF:000031">
    <property type="entry name" value="Molecular chaperone DnaJ"/>
    <property type="match status" value="1"/>
</dbReference>
<dbReference type="FunFam" id="2.10.230.10:FF:000002">
    <property type="entry name" value="Molecular chaperone DnaJ"/>
    <property type="match status" value="1"/>
</dbReference>
<dbReference type="FunFam" id="2.60.260.20:FF:000004">
    <property type="entry name" value="Molecular chaperone DnaJ"/>
    <property type="match status" value="1"/>
</dbReference>
<dbReference type="Gene3D" id="1.10.287.110">
    <property type="entry name" value="DnaJ domain"/>
    <property type="match status" value="1"/>
</dbReference>
<dbReference type="Gene3D" id="2.10.230.10">
    <property type="entry name" value="Heat shock protein DnaJ, cysteine-rich domain"/>
    <property type="match status" value="1"/>
</dbReference>
<dbReference type="Gene3D" id="2.60.260.20">
    <property type="entry name" value="Urease metallochaperone UreE, N-terminal domain"/>
    <property type="match status" value="2"/>
</dbReference>
<dbReference type="HAMAP" id="MF_01152">
    <property type="entry name" value="DnaJ"/>
    <property type="match status" value="1"/>
</dbReference>
<dbReference type="InterPro" id="IPR012724">
    <property type="entry name" value="DnaJ"/>
</dbReference>
<dbReference type="InterPro" id="IPR002939">
    <property type="entry name" value="DnaJ_C"/>
</dbReference>
<dbReference type="InterPro" id="IPR001623">
    <property type="entry name" value="DnaJ_domain"/>
</dbReference>
<dbReference type="InterPro" id="IPR018253">
    <property type="entry name" value="DnaJ_domain_CS"/>
</dbReference>
<dbReference type="InterPro" id="IPR008971">
    <property type="entry name" value="HSP40/DnaJ_pept-bd"/>
</dbReference>
<dbReference type="InterPro" id="IPR001305">
    <property type="entry name" value="HSP_DnaJ_Cys-rich_dom"/>
</dbReference>
<dbReference type="InterPro" id="IPR036410">
    <property type="entry name" value="HSP_DnaJ_Cys-rich_dom_sf"/>
</dbReference>
<dbReference type="InterPro" id="IPR036869">
    <property type="entry name" value="J_dom_sf"/>
</dbReference>
<dbReference type="NCBIfam" id="TIGR02349">
    <property type="entry name" value="DnaJ_bact"/>
    <property type="match status" value="1"/>
</dbReference>
<dbReference type="NCBIfam" id="NF008035">
    <property type="entry name" value="PRK10767.1"/>
    <property type="match status" value="1"/>
</dbReference>
<dbReference type="PANTHER" id="PTHR43096:SF48">
    <property type="entry name" value="CHAPERONE PROTEIN DNAJ"/>
    <property type="match status" value="1"/>
</dbReference>
<dbReference type="PANTHER" id="PTHR43096">
    <property type="entry name" value="DNAJ HOMOLOG 1, MITOCHONDRIAL-RELATED"/>
    <property type="match status" value="1"/>
</dbReference>
<dbReference type="Pfam" id="PF00226">
    <property type="entry name" value="DnaJ"/>
    <property type="match status" value="1"/>
</dbReference>
<dbReference type="Pfam" id="PF01556">
    <property type="entry name" value="DnaJ_C"/>
    <property type="match status" value="1"/>
</dbReference>
<dbReference type="Pfam" id="PF00684">
    <property type="entry name" value="DnaJ_CXXCXGXG"/>
    <property type="match status" value="1"/>
</dbReference>
<dbReference type="PRINTS" id="PR00625">
    <property type="entry name" value="JDOMAIN"/>
</dbReference>
<dbReference type="SMART" id="SM00271">
    <property type="entry name" value="DnaJ"/>
    <property type="match status" value="1"/>
</dbReference>
<dbReference type="SUPFAM" id="SSF46565">
    <property type="entry name" value="Chaperone J-domain"/>
    <property type="match status" value="1"/>
</dbReference>
<dbReference type="SUPFAM" id="SSF57938">
    <property type="entry name" value="DnaJ/Hsp40 cysteine-rich domain"/>
    <property type="match status" value="1"/>
</dbReference>
<dbReference type="SUPFAM" id="SSF49493">
    <property type="entry name" value="HSP40/DnaJ peptide-binding domain"/>
    <property type="match status" value="2"/>
</dbReference>
<dbReference type="PROSITE" id="PS00636">
    <property type="entry name" value="DNAJ_1"/>
    <property type="match status" value="1"/>
</dbReference>
<dbReference type="PROSITE" id="PS50076">
    <property type="entry name" value="DNAJ_2"/>
    <property type="match status" value="1"/>
</dbReference>
<dbReference type="PROSITE" id="PS51188">
    <property type="entry name" value="ZF_CR"/>
    <property type="match status" value="1"/>
</dbReference>
<evidence type="ECO:0000255" key="1">
    <source>
        <dbReference type="HAMAP-Rule" id="MF_01152"/>
    </source>
</evidence>
<accession>Q0BI17</accession>
<name>DNAJ_BURCM</name>
<keyword id="KW-0143">Chaperone</keyword>
<keyword id="KW-0963">Cytoplasm</keyword>
<keyword id="KW-0235">DNA replication</keyword>
<keyword id="KW-0479">Metal-binding</keyword>
<keyword id="KW-0677">Repeat</keyword>
<keyword id="KW-0346">Stress response</keyword>
<keyword id="KW-0862">Zinc</keyword>
<keyword id="KW-0863">Zinc-finger</keyword>
<gene>
    <name evidence="1" type="primary">dnaJ</name>
    <name type="ordered locus">Bamb_0647</name>
</gene>
<sequence length="378" mass="40841">MAKRDYYEVLGVAKNASDDEIKKAYRKLAMKYHPDRNPDSKDAEEHFKEAKEAYEMLSDGQKRAAYDQYGHAGVDPNMGGAGGQGFGGFADAFGDIFGDIFGQAAGGAARGGRGGPQVYRGADLRYSMEITLEQAAHGYDTQIRVPSWVSCEVCHGSGAKPGTKPETCPTCHGQGTVRMSQGFFSIQQTCPKCHGTGTYIPEPCVHCHGSGKVKETKTLEVKIPAGIDDGMRIRSAGNGEPGINGGPPGDLYVEIHIKPHSVFERDGDDLHCQMPIPFTTAALGGEIEVPTLAGRASFPVPEGTQSGKTFRLRGKGIKGLRSSIAGDLYVHVQVETPVKLTDQQRDLLKQFEKSLAEGGARHSPQSKSWFDRVKSFFE</sequence>
<comment type="function">
    <text evidence="1">Participates actively in the response to hyperosmotic and heat shock by preventing the aggregation of stress-denatured proteins and by disaggregating proteins, also in an autonomous, DnaK-independent fashion. Unfolded proteins bind initially to DnaJ; upon interaction with the DnaJ-bound protein, DnaK hydrolyzes its bound ATP, resulting in the formation of a stable complex. GrpE releases ADP from DnaK; ATP binding to DnaK triggers the release of the substrate protein, thus completing the reaction cycle. Several rounds of ATP-dependent interactions between DnaJ, DnaK and GrpE are required for fully efficient folding. Also involved, together with DnaK and GrpE, in the DNA replication of plasmids through activation of initiation proteins.</text>
</comment>
<comment type="cofactor">
    <cofactor evidence="1">
        <name>Zn(2+)</name>
        <dbReference type="ChEBI" id="CHEBI:29105"/>
    </cofactor>
    <text evidence="1">Binds 2 Zn(2+) ions per monomer.</text>
</comment>
<comment type="subunit">
    <text evidence="1">Homodimer.</text>
</comment>
<comment type="subcellular location">
    <subcellularLocation>
        <location evidence="1">Cytoplasm</location>
    </subcellularLocation>
</comment>
<comment type="domain">
    <text evidence="1">The J domain is necessary and sufficient to stimulate DnaK ATPase activity. Zinc center 1 plays an important role in the autonomous, DnaK-independent chaperone activity of DnaJ. Zinc center 2 is essential for interaction with DnaK and for DnaJ activity.</text>
</comment>
<comment type="similarity">
    <text evidence="1">Belongs to the DnaJ family.</text>
</comment>
<proteinExistence type="inferred from homology"/>